<gene>
    <name type="primary">Adamts13</name>
    <name type="synonym">Gm710</name>
</gene>
<sequence>MSQLCLWLTCQPCYAVSVRGILTGAIFILGCWGLSDFQKSLLQDLEPKDVSSYFGHHAAPFTGHPPSHLQRLRRRRTLEDILHLELLVAVGPDVSRAHQEDTERYVLTNLNIGSELLRNPSLGVQFQVHLVKLITLSDSESTPNITANITSSLMSVCEWSQTINPHDDRDPSHADLILYITRFDLELPDGNQQVRGVTQLGGACSLSWSCLITEDTGFDLGVTIAHEIGHSFGLDHDGAPGSGSTCKASGHVMAADGATPTGGTLEWSACSQRQLQHLLSTGQMHCFQDPPGLQSGLTRHQLMAQPGLYYSADDQCRVAFGSGAVACTFSREGLDVCQALSCHTDPLDQSSCSRLLVPLLDGTECGVEKWCSKARCRSLAELAPVAAVHGHWSSWGPHSPCSRSCGGGVITRRRWCNNPRPAFGGRACVGEDLQAKMCNTQACEKTQLEFMSEQCAQTDRQPLQLSQGTASFYHWDAAVQYSQGDTLCRHMCWAVGESFIVSRGDRFLDGTRCVPSGPQDDGTLSLCLLGSCRTFGCDGRMDSQKVWDACQVCGGDNSTCSSRNGSFTAGRAREYVTFLIVTPNMTNAHIVNRRPLFTHLAVRIQGHYIVAGKTSISPNTTYPSLLEDYRVEYRVTLTEDQLPHLEEIHIRGPVRDDIEIQVYRRYGGEYGDLTHPDITFSYFQLKQQAAWVWTAKRGPCSVSCGAGLRWVTYSCQDQAQDKWVKNAQCQGSPQPPAWQEPCVSAPCSPYWVAGDFSPCSVSCGGGLRERSLRCVETQDGFLKTLPPARCRAVAQQPAAEVENCNSQPCPTRWEVSDPGPCMSSACEAGLDSRNVTCVSRAGDPEKPETAGPCRTDEMSAMLEPCSRSLCSPGLGQVDNTMSLGEEAPSPVGSDKPGAQAEHVWTPLVGLCSISCGRGLKELYFLCMDSVLKMPVQEELCGLASKPPSRWEVCRARPCPARWETQVLAPCPVTCGGGRVPLSVRCVQLDRGHPISVPHSKCSPVPKPGSFEDCSPEPCPARWKVLSLGPCSASCGLGTATQMVACMQLDQGHDNEVNETFCKALVRPQASVPCLIADCAFRWHISAWTECSVSCGDGIQRRHDTCLGPQAQVPVPANFCQHLPKPMTVRGCWAGPCAGQETSSSLPHKEATLPSQTQAAATVASLQWSQPRARTPTLFSASQSLGLQENLEEHGACGRQYLEPTGTIHMRDQGRLDCVVAIGRPLGEVVTLQILESSLKCSAGEQLLLWGRFTWRKTCRKMPGMTFSTKTNTVVVKQHRVLPGGGVLLRYWSQPAPGTFYKECDRQLFGPRGEIVSPSLSPDGRKAGTCRVFISVAPQARIAIRALASDMGTASEGTNANYVSIRDIHSLRTTTFWGQQVLYWESEGSEAELEFSPGFLEAHASLQGEYWTISPRTSEQDDSLALS</sequence>
<feature type="signal peptide" evidence="4">
    <location>
        <begin position="1"/>
        <end position="33"/>
    </location>
</feature>
<feature type="propeptide" id="PRO_0000247512" evidence="1">
    <location>
        <begin position="34"/>
        <end position="76"/>
    </location>
</feature>
<feature type="chain" id="PRO_0000247513" description="A disintegrin and metalloproteinase with thrombospondin motifs 13">
    <location>
        <begin position="77"/>
        <end position="1426"/>
    </location>
</feature>
<feature type="domain" description="Peptidase M12B" evidence="6">
    <location>
        <begin position="74"/>
        <end position="291"/>
    </location>
</feature>
<feature type="domain" description="Disintegrin">
    <location>
        <begin position="295"/>
        <end position="388"/>
    </location>
</feature>
<feature type="domain" description="TSP type-1 1" evidence="5">
    <location>
        <begin position="389"/>
        <end position="444"/>
    </location>
</feature>
<feature type="domain" description="TSP type-1 2" evidence="5">
    <location>
        <begin position="687"/>
        <end position="746"/>
    </location>
</feature>
<feature type="domain" description="TSP type-1 3" evidence="5">
    <location>
        <begin position="747"/>
        <end position="810"/>
    </location>
</feature>
<feature type="domain" description="TSP type-1 4" evidence="5">
    <location>
        <begin position="808"/>
        <end position="871"/>
    </location>
</feature>
<feature type="domain" description="TSP type-1 5" evidence="5">
    <location>
        <begin position="904"/>
        <end position="957"/>
    </location>
</feature>
<feature type="domain" description="TSP type-1 6" evidence="5">
    <location>
        <begin position="958"/>
        <end position="1019"/>
    </location>
</feature>
<feature type="domain" description="TSP type-1 7" evidence="5">
    <location>
        <begin position="1020"/>
        <end position="1078"/>
    </location>
</feature>
<feature type="domain" description="TSP type-1 8" evidence="5">
    <location>
        <begin position="1079"/>
        <end position="1137"/>
    </location>
</feature>
<feature type="domain" description="CUB 1">
    <location>
        <begin position="1195"/>
        <end position="1302"/>
    </location>
</feature>
<feature type="domain" description="CUB 2">
    <location>
        <begin position="1293"/>
        <end position="1426"/>
    </location>
</feature>
<feature type="region of interest" description="Cysteine-rich">
    <location>
        <begin position="445"/>
        <end position="561"/>
    </location>
</feature>
<feature type="region of interest" description="Spacer">
    <location>
        <begin position="556"/>
        <end position="685"/>
    </location>
</feature>
<feature type="short sequence motif" description="Cell attachment site" evidence="4">
    <location>
        <begin position="503"/>
        <end position="505"/>
    </location>
</feature>
<feature type="active site" evidence="6 7">
    <location>
        <position position="227"/>
    </location>
</feature>
<feature type="binding site" evidence="1">
    <location>
        <position position="85"/>
    </location>
    <ligand>
        <name>Ca(2+)</name>
        <dbReference type="ChEBI" id="CHEBI:29108"/>
        <label>1</label>
    </ligand>
</feature>
<feature type="binding site" evidence="1">
    <location>
        <position position="175"/>
    </location>
    <ligand>
        <name>Ca(2+)</name>
        <dbReference type="ChEBI" id="CHEBI:29108"/>
        <label>1</label>
    </ligand>
</feature>
<feature type="binding site" evidence="2">
    <location>
        <position position="184"/>
    </location>
    <ligand>
        <name>Ca(2+)</name>
        <dbReference type="ChEBI" id="CHEBI:29108"/>
        <label>2</label>
        <note>high affinity</note>
    </ligand>
</feature>
<feature type="binding site" evidence="2">
    <location>
        <position position="186"/>
    </location>
    <ligand>
        <name>Ca(2+)</name>
        <dbReference type="ChEBI" id="CHEBI:29108"/>
        <label>2</label>
        <note>high affinity</note>
    </ligand>
</feature>
<feature type="binding site" evidence="2">
    <location>
        <position position="189"/>
    </location>
    <ligand>
        <name>Ca(2+)</name>
        <dbReference type="ChEBI" id="CHEBI:29108"/>
        <label>2</label>
        <note>high affinity</note>
    </ligand>
</feature>
<feature type="binding site" evidence="2">
    <location>
        <position position="214"/>
    </location>
    <ligand>
        <name>Ca(2+)</name>
        <dbReference type="ChEBI" id="CHEBI:29108"/>
        <label>2</label>
        <note>high affinity</note>
    </ligand>
</feature>
<feature type="binding site" evidence="3">
    <location>
        <position position="226"/>
    </location>
    <ligand>
        <name>Zn(2+)</name>
        <dbReference type="ChEBI" id="CHEBI:29105"/>
        <note>catalytic</note>
    </ligand>
</feature>
<feature type="binding site" evidence="3">
    <location>
        <position position="230"/>
    </location>
    <ligand>
        <name>Zn(2+)</name>
        <dbReference type="ChEBI" id="CHEBI:29105"/>
        <note>catalytic</note>
    </ligand>
</feature>
<feature type="binding site" evidence="3">
    <location>
        <position position="236"/>
    </location>
    <ligand>
        <name>Zn(2+)</name>
        <dbReference type="ChEBI" id="CHEBI:29105"/>
        <note>catalytic</note>
    </ligand>
</feature>
<feature type="binding site" evidence="1">
    <location>
        <position position="281"/>
    </location>
    <ligand>
        <name>Ca(2+)</name>
        <dbReference type="ChEBI" id="CHEBI:29108"/>
        <label>1</label>
    </ligand>
</feature>
<feature type="binding site" evidence="1">
    <location>
        <position position="289"/>
    </location>
    <ligand>
        <name>Ca(2+)</name>
        <dbReference type="ChEBI" id="CHEBI:29108"/>
        <label>1</label>
    </ligand>
</feature>
<feature type="glycosylation site" description="N-linked (GlcNAc...) asparagine" evidence="4">
    <location>
        <position position="144"/>
    </location>
</feature>
<feature type="glycosylation site" description="N-linked (GlcNAc...) asparagine" evidence="4">
    <location>
        <position position="148"/>
    </location>
</feature>
<feature type="glycosylation site" description="N-linked (GlcNAc...) asparagine" evidence="4">
    <location>
        <position position="557"/>
    </location>
</feature>
<feature type="glycosylation site" description="N-linked (GlcNAc...) asparagine" evidence="4">
    <location>
        <position position="564"/>
    </location>
</feature>
<feature type="glycosylation site" description="N-linked (GlcNAc...) asparagine" evidence="4">
    <location>
        <position position="584"/>
    </location>
</feature>
<feature type="glycosylation site" description="N-linked (GlcNAc...) asparagine" evidence="4">
    <location>
        <position position="619"/>
    </location>
</feature>
<feature type="glycosylation site" description="O-linked (Fuc...) serine" evidence="1">
    <location>
        <position position="703"/>
    </location>
</feature>
<feature type="glycosylation site" description="O-linked (Fuc...) serine" evidence="1">
    <location>
        <position position="762"/>
    </location>
</feature>
<feature type="glycosylation site" description="N-linked (GlcNAc...) asparagine" evidence="4">
    <location>
        <position position="834"/>
    </location>
</feature>
<feature type="glycosylation site" description="O-linked (Fuc...) serine" evidence="1">
    <location>
        <position position="914"/>
    </location>
</feature>
<feature type="glycosylation site" description="O-linked (Fuc...) threonine" evidence="1">
    <location>
        <position position="973"/>
    </location>
</feature>
<feature type="glycosylation site" description="O-linked (Fuc...) serine" evidence="1">
    <location>
        <position position="1033"/>
    </location>
</feature>
<feature type="glycosylation site" description="N-linked (GlcNAc...) asparagine" evidence="4">
    <location>
        <position position="1057"/>
    </location>
</feature>
<feature type="glycosylation site" description="O-linked (Fuc...) serine" evidence="1">
    <location>
        <position position="1093"/>
    </location>
</feature>
<feature type="disulfide bond" evidence="1">
    <location>
        <begin position="157"/>
        <end position="210"/>
    </location>
</feature>
<feature type="disulfide bond" evidence="1">
    <location>
        <begin position="204"/>
        <end position="286"/>
    </location>
</feature>
<feature type="disulfide bond" evidence="1">
    <location>
        <begin position="246"/>
        <end position="270"/>
    </location>
</feature>
<feature type="disulfide bond" evidence="1">
    <location>
        <begin position="316"/>
        <end position="342"/>
    </location>
</feature>
<feature type="disulfide bond" evidence="1">
    <location>
        <begin position="327"/>
        <end position="352"/>
    </location>
</feature>
<feature type="disulfide bond" evidence="1">
    <location>
        <begin position="337"/>
        <end position="371"/>
    </location>
</feature>
<feature type="disulfide bond" evidence="1">
    <location>
        <begin position="365"/>
        <end position="376"/>
    </location>
</feature>
<feature type="disulfide bond" evidence="1">
    <location>
        <begin position="401"/>
        <end position="438"/>
    </location>
</feature>
<feature type="disulfide bond" evidence="1">
    <location>
        <begin position="405"/>
        <end position="443"/>
    </location>
</feature>
<feature type="disulfide bond" evidence="1">
    <location>
        <begin position="416"/>
        <end position="428"/>
    </location>
</feature>
<feature type="disulfide bond" evidence="1">
    <location>
        <begin position="488"/>
        <end position="527"/>
    </location>
</feature>
<feature type="disulfide bond" evidence="1">
    <location>
        <begin position="513"/>
        <end position="532"/>
    </location>
</feature>
<feature type="disulfide bond" evidence="1">
    <location>
        <begin position="537"/>
        <end position="553"/>
    </location>
</feature>
<feature type="disulfide bond" evidence="1">
    <location>
        <begin position="550"/>
        <end position="560"/>
    </location>
</feature>
<feature type="sequence variant" description="In Adamts13S.">
    <original>WKVLSLGPCSASCGLG</original>
    <variation>ALVWEAAPTFAVTRWR</variation>
    <location>
        <begin position="1022"/>
        <end position="1037"/>
    </location>
</feature>
<feature type="sequence variant" description="In Adamts13S.">
    <location>
        <begin position="1038"/>
        <end position="1426"/>
    </location>
</feature>
<feature type="sequence conflict" description="In Ref. 1; BAC55159." evidence="10" ref="1">
    <original>R</original>
    <variation>H</variation>
    <location>
        <position position="354"/>
    </location>
</feature>
<reference key="1">
    <citation type="journal article" date="2004" name="J. Biol. Chem.">
        <title>Identification of strain-specific variants of mouse Adamts13 gene encoding von Willebrand factor-cleaving protease.</title>
        <authorList>
            <person name="Banno F."/>
            <person name="Kaminaka K."/>
            <person name="Soejima K."/>
            <person name="Kokame K."/>
            <person name="Miyata T."/>
        </authorList>
    </citation>
    <scope>NUCLEOTIDE SEQUENCE [MRNA]</scope>
    <scope>TISSUE SPECIFICITY</scope>
    <scope>SUBCELLULAR LOCATION</scope>
    <scope>POLYMORPHISM</scope>
    <source>
        <strain>129</strain>
        <strain>129/Sv</strain>
        <tissue>Liver</tissue>
    </source>
</reference>
<reference key="2">
    <citation type="journal article" date="2009" name="PLoS Biol.">
        <title>Lineage-specific biology revealed by a finished genome assembly of the mouse.</title>
        <authorList>
            <person name="Church D.M."/>
            <person name="Goodstadt L."/>
            <person name="Hillier L.W."/>
            <person name="Zody M.C."/>
            <person name="Goldstein S."/>
            <person name="She X."/>
            <person name="Bult C.J."/>
            <person name="Agarwala R."/>
            <person name="Cherry J.L."/>
            <person name="DiCuccio M."/>
            <person name="Hlavina W."/>
            <person name="Kapustin Y."/>
            <person name="Meric P."/>
            <person name="Maglott D."/>
            <person name="Birtle Z."/>
            <person name="Marques A.C."/>
            <person name="Graves T."/>
            <person name="Zhou S."/>
            <person name="Teague B."/>
            <person name="Potamousis K."/>
            <person name="Churas C."/>
            <person name="Place M."/>
            <person name="Herschleb J."/>
            <person name="Runnheim R."/>
            <person name="Forrest D."/>
            <person name="Amos-Landgraf J."/>
            <person name="Schwartz D.C."/>
            <person name="Cheng Z."/>
            <person name="Lindblad-Toh K."/>
            <person name="Eichler E.E."/>
            <person name="Ponting C.P."/>
        </authorList>
    </citation>
    <scope>NUCLEOTIDE SEQUENCE [LARGE SCALE GENOMIC DNA]</scope>
    <source>
        <strain>C57BL/6J</strain>
    </source>
</reference>
<reference key="3">
    <citation type="journal article" date="2005" name="J. Thromb. Haemost.">
        <title>Cloning, expression and functional characterization of the full-length murine ADAMTS13.</title>
        <authorList>
            <person name="Bruno K."/>
            <person name="Voelkel D."/>
            <person name="Plaimauer B."/>
            <person name="Antoine G."/>
            <person name="Pable S."/>
            <person name="Motto D.G."/>
            <person name="Lemmerhirt H.L."/>
            <person name="Dorner F."/>
            <person name="Zimmermann K."/>
            <person name="Scheiflinger F."/>
        </authorList>
    </citation>
    <scope>FUNCTION</scope>
    <scope>CATALYTIC ACTIVITY</scope>
    <scope>TISSUE SPECIFICITY</scope>
    <scope>DEVELOPMENTAL STAGE</scope>
</reference>
<organism>
    <name type="scientific">Mus musculus</name>
    <name type="common">Mouse</name>
    <dbReference type="NCBI Taxonomy" id="10090"/>
    <lineage>
        <taxon>Eukaryota</taxon>
        <taxon>Metazoa</taxon>
        <taxon>Chordata</taxon>
        <taxon>Craniata</taxon>
        <taxon>Vertebrata</taxon>
        <taxon>Euteleostomi</taxon>
        <taxon>Mammalia</taxon>
        <taxon>Eutheria</taxon>
        <taxon>Euarchontoglires</taxon>
        <taxon>Glires</taxon>
        <taxon>Rodentia</taxon>
        <taxon>Myomorpha</taxon>
        <taxon>Muroidea</taxon>
        <taxon>Muridae</taxon>
        <taxon>Murinae</taxon>
        <taxon>Mus</taxon>
        <taxon>Mus</taxon>
    </lineage>
</organism>
<comment type="function">
    <text evidence="9">Cleaves the vWF multimers in plasma into smaller forms thereby controlling vWF-mediated platelet thrombus formation.</text>
</comment>
<comment type="catalytic activity">
    <reaction evidence="9">
        <text>The enzyme cleaves the von Willebrand factor at bond 842-Tyr-|-Met-843 within the A2 domain.</text>
        <dbReference type="EC" id="3.4.24.87"/>
    </reaction>
</comment>
<comment type="cofactor">
    <cofactor evidence="3">
        <name>Zn(2+)</name>
        <dbReference type="ChEBI" id="CHEBI:29105"/>
    </cofactor>
    <text evidence="3">Binds 1 zinc ion per subunit.</text>
</comment>
<comment type="cofactor">
    <cofactor evidence="2">
        <name>Ca(2+)</name>
        <dbReference type="ChEBI" id="CHEBI:29108"/>
    </cofactor>
    <text evidence="2">Binds 4 Ca(2+) ions.</text>
</comment>
<comment type="activity regulation">
    <text evidence="1">Zinc and calcium ions cooperatively modulate enzyme activity. The cleavage of the pro-domain is not required for protease activity. Dependence on calcium for proteolytic activity is mediated by the high affinity site (By similarity).</text>
</comment>
<comment type="subcellular location">
    <subcellularLocation>
        <location evidence="8">Secreted</location>
    </subcellularLocation>
    <text evidence="1">Secretion enhanced by O-fucosylation of TSP type-1 repeats.</text>
</comment>
<comment type="tissue specificity">
    <text evidence="8 9">Plasma. Expression is consistently high in liver, medium in lung and spleen, low in skeletal muscle and undetectable in heart, brain, kidney and testis.</text>
</comment>
<comment type="developmental stage">
    <text evidence="9">Increases steadly with the age of embryo, reaching highest levels in embryonic tissues of 19 days of gestation.</text>
</comment>
<comment type="domain">
    <text evidence="1">The pro-domain is not required for folding or secretion and does not perform the common function of maintening enzyme latency.</text>
</comment>
<comment type="domain">
    <text evidence="1">The globular cysteineless spacer domain adopts a jelly-roll topology, and is necessary to recognize and cleave vWF. The C-terminal TSP type-1 and CUB domains may modulate this interaction (By similarity).</text>
</comment>
<comment type="PTM">
    <text evidence="1">The precursor is processed by a furin endopeptidase which cleaves off the pro-domain.</text>
</comment>
<comment type="PTM">
    <text evidence="1">O-glycosylated (By similarity). O-fucosylated by POFUT2 on a serine or a threonine residue found within the consensus sequence C1-X(2)-(S/T)-C2-G of the TSP type-1 repeat domains where C1 and C2 are the first and second cysteine residue of the repeat, respectively. Fucosylated repeats can then be further glycosylated by the addition of a beta-1,3-glucose residue by the glucosyltransferase, B3GALTL. Fucosylation mediates the efficient secretion of ADAMTS13. May also be C-glycosylated on tryptophan residues within the consensus sequence W-X-X-W of the TPRs, and also N-glycosylated. These other glycosylations can also facilitate secretion (By similarity).</text>
</comment>
<comment type="polymorphism">
    <text>Two variants (Adamts13L and Adamts13S) were isolated that differed in the insertion of an intracisternal A particle (IAP) retrotransposon including a premature stop at the position 1036. In Adamts13S the C-terminal two TSP type-1 and two CUB domains are replaced with a 16-amino acid sequence derived from the IAP, this variant exhibited vWF cleaving activities in vitro. The IAP insertion is strain-specific and is found in BALB/c, C3H/He, C57BL/6 and DBA/2 strains, but not in the 129/Sv strain.</text>
</comment>
<keyword id="KW-0094">Blood coagulation</keyword>
<keyword id="KW-0106">Calcium</keyword>
<keyword id="KW-0165">Cleavage on pair of basic residues</keyword>
<keyword id="KW-1015">Disulfide bond</keyword>
<keyword id="KW-0325">Glycoprotein</keyword>
<keyword id="KW-0356">Hemostasis</keyword>
<keyword id="KW-0378">Hydrolase</keyword>
<keyword id="KW-0479">Metal-binding</keyword>
<keyword id="KW-0482">Metalloprotease</keyword>
<keyword id="KW-0645">Protease</keyword>
<keyword id="KW-1185">Reference proteome</keyword>
<keyword id="KW-0677">Repeat</keyword>
<keyword id="KW-0964">Secreted</keyword>
<keyword id="KW-0732">Signal</keyword>
<keyword id="KW-0862">Zinc</keyword>
<keyword id="KW-0865">Zymogen</keyword>
<accession>Q769J6</accession>
<accession>A2ALB4</accession>
<accession>Q76LW1</accession>
<proteinExistence type="evidence at protein level"/>
<name>ATS13_MOUSE</name>
<evidence type="ECO:0000250" key="1"/>
<evidence type="ECO:0000250" key="2">
    <source>
        <dbReference type="UniProtKB" id="Q76LX8"/>
    </source>
</evidence>
<evidence type="ECO:0000250" key="3">
    <source>
        <dbReference type="UniProtKB" id="Q9UNA0"/>
    </source>
</evidence>
<evidence type="ECO:0000255" key="4"/>
<evidence type="ECO:0000255" key="5">
    <source>
        <dbReference type="PROSITE-ProRule" id="PRU00210"/>
    </source>
</evidence>
<evidence type="ECO:0000255" key="6">
    <source>
        <dbReference type="PROSITE-ProRule" id="PRU00276"/>
    </source>
</evidence>
<evidence type="ECO:0000255" key="7">
    <source>
        <dbReference type="PROSITE-ProRule" id="PRU10095"/>
    </source>
</evidence>
<evidence type="ECO:0000269" key="8">
    <source>
    </source>
</evidence>
<evidence type="ECO:0000269" key="9">
    <source>
    </source>
</evidence>
<evidence type="ECO:0000305" key="10"/>
<dbReference type="EC" id="3.4.24.87" evidence="9"/>
<dbReference type="EMBL" id="AB071302">
    <property type="protein sequence ID" value="BAC55159.2"/>
    <property type="molecule type" value="mRNA"/>
</dbReference>
<dbReference type="EMBL" id="AB095445">
    <property type="protein sequence ID" value="BAD04062.1"/>
    <property type="molecule type" value="Genomic_DNA"/>
</dbReference>
<dbReference type="EMBL" id="AB112362">
    <property type="protein sequence ID" value="BAD18090.1"/>
    <property type="molecule type" value="mRNA"/>
</dbReference>
<dbReference type="EMBL" id="AL773563">
    <property type="status" value="NOT_ANNOTATED_CDS"/>
    <property type="molecule type" value="Genomic_DNA"/>
</dbReference>
<dbReference type="EMBL" id="AL845266">
    <property type="status" value="NOT_ANNOTATED_CDS"/>
    <property type="molecule type" value="Genomic_DNA"/>
</dbReference>
<dbReference type="CCDS" id="CCDS15820.1"/>
<dbReference type="RefSeq" id="NP_001001322.1">
    <property type="nucleotide sequence ID" value="NM_001001322.2"/>
</dbReference>
<dbReference type="RefSeq" id="NP_001277392.1">
    <property type="nucleotide sequence ID" value="NM_001290463.1"/>
</dbReference>
<dbReference type="SMR" id="Q769J6"/>
<dbReference type="FunCoup" id="Q769J6">
    <property type="interactions" value="137"/>
</dbReference>
<dbReference type="STRING" id="10090.ENSMUSP00000099955"/>
<dbReference type="MEROPS" id="M12.241"/>
<dbReference type="GlyCosmos" id="Q769J6">
    <property type="glycosylation" value="14 sites, No reported glycans"/>
</dbReference>
<dbReference type="GlyGen" id="Q769J6">
    <property type="glycosylation" value="15 sites"/>
</dbReference>
<dbReference type="iPTMnet" id="Q769J6"/>
<dbReference type="PhosphoSitePlus" id="Q769J6"/>
<dbReference type="PaxDb" id="10090-ENSMUSP00000099955"/>
<dbReference type="Antibodypedia" id="31871">
    <property type="antibodies" value="534 antibodies from 36 providers"/>
</dbReference>
<dbReference type="DNASU" id="279028"/>
<dbReference type="Ensembl" id="ENSMUST00000102891.4">
    <property type="protein sequence ID" value="ENSMUSP00000099955.4"/>
    <property type="gene ID" value="ENSMUSG00000014852.17"/>
</dbReference>
<dbReference type="GeneID" id="279028"/>
<dbReference type="KEGG" id="mmu:279028"/>
<dbReference type="UCSC" id="uc008iwp.1">
    <property type="organism name" value="mouse"/>
</dbReference>
<dbReference type="AGR" id="MGI:2685556"/>
<dbReference type="CTD" id="11093"/>
<dbReference type="MGI" id="MGI:2685556">
    <property type="gene designation" value="Adamts13"/>
</dbReference>
<dbReference type="VEuPathDB" id="HostDB:ENSMUSG00000014852"/>
<dbReference type="eggNOG" id="KOG3538">
    <property type="taxonomic scope" value="Eukaryota"/>
</dbReference>
<dbReference type="GeneTree" id="ENSGT00940000158379"/>
<dbReference type="InParanoid" id="Q769J6"/>
<dbReference type="OMA" id="PDVHQAH"/>
<dbReference type="OrthoDB" id="9942326at2759"/>
<dbReference type="PhylomeDB" id="Q769J6"/>
<dbReference type="TreeFam" id="TF313537"/>
<dbReference type="BRENDA" id="3.4.24.87">
    <property type="organism ID" value="3474"/>
</dbReference>
<dbReference type="Reactome" id="R-MMU-5173214">
    <property type="pathway name" value="O-glycosylation of TSR domain-containing proteins"/>
</dbReference>
<dbReference type="Reactome" id="R-MMU-75892">
    <property type="pathway name" value="Platelet Adhesion to exposed collagen"/>
</dbReference>
<dbReference type="BioGRID-ORCS" id="279028">
    <property type="hits" value="1 hit in 78 CRISPR screens"/>
</dbReference>
<dbReference type="ChiTaRS" id="Adamts13">
    <property type="organism name" value="mouse"/>
</dbReference>
<dbReference type="PRO" id="PR:Q769J6"/>
<dbReference type="Proteomes" id="UP000000589">
    <property type="component" value="Chromosome 2"/>
</dbReference>
<dbReference type="RNAct" id="Q769J6">
    <property type="molecule type" value="protein"/>
</dbReference>
<dbReference type="Bgee" id="ENSMUSG00000014852">
    <property type="expression patterns" value="Expressed in liver and 20 other cell types or tissues"/>
</dbReference>
<dbReference type="ExpressionAtlas" id="Q769J6">
    <property type="expression patterns" value="baseline and differential"/>
</dbReference>
<dbReference type="GO" id="GO:0005615">
    <property type="term" value="C:extracellular space"/>
    <property type="evidence" value="ECO:0000314"/>
    <property type="project" value="MGI"/>
</dbReference>
<dbReference type="GO" id="GO:0004175">
    <property type="term" value="F:endopeptidase activity"/>
    <property type="evidence" value="ECO:0000314"/>
    <property type="project" value="MGI"/>
</dbReference>
<dbReference type="GO" id="GO:0046872">
    <property type="term" value="F:metal ion binding"/>
    <property type="evidence" value="ECO:0007669"/>
    <property type="project" value="UniProtKB-KW"/>
</dbReference>
<dbReference type="GO" id="GO:0004222">
    <property type="term" value="F:metalloendopeptidase activity"/>
    <property type="evidence" value="ECO:0007669"/>
    <property type="project" value="InterPro"/>
</dbReference>
<dbReference type="GO" id="GO:0007596">
    <property type="term" value="P:blood coagulation"/>
    <property type="evidence" value="ECO:0007669"/>
    <property type="project" value="UniProtKB-KW"/>
</dbReference>
<dbReference type="GO" id="GO:0071353">
    <property type="term" value="P:cellular response to interleukin-4"/>
    <property type="evidence" value="ECO:0007669"/>
    <property type="project" value="Ensembl"/>
</dbReference>
<dbReference type="GO" id="GO:0071222">
    <property type="term" value="P:cellular response to lipopolysaccharide"/>
    <property type="evidence" value="ECO:0007669"/>
    <property type="project" value="Ensembl"/>
</dbReference>
<dbReference type="GO" id="GO:0071356">
    <property type="term" value="P:cellular response to tumor necrosis factor"/>
    <property type="evidence" value="ECO:0007669"/>
    <property type="project" value="Ensembl"/>
</dbReference>
<dbReference type="GO" id="GO:0071346">
    <property type="term" value="P:cellular response to type II interferon"/>
    <property type="evidence" value="ECO:0007669"/>
    <property type="project" value="Ensembl"/>
</dbReference>
<dbReference type="GO" id="GO:0030198">
    <property type="term" value="P:extracellular matrix organization"/>
    <property type="evidence" value="ECO:0007669"/>
    <property type="project" value="InterPro"/>
</dbReference>
<dbReference type="GO" id="GO:0043171">
    <property type="term" value="P:peptide catabolic process"/>
    <property type="evidence" value="ECO:0007669"/>
    <property type="project" value="Ensembl"/>
</dbReference>
<dbReference type="GO" id="GO:0030163">
    <property type="term" value="P:protein catabolic process"/>
    <property type="evidence" value="ECO:0007669"/>
    <property type="project" value="Ensembl"/>
</dbReference>
<dbReference type="GO" id="GO:0006508">
    <property type="term" value="P:proteolysis"/>
    <property type="evidence" value="ECO:0000314"/>
    <property type="project" value="MGI"/>
</dbReference>
<dbReference type="GO" id="GO:0014075">
    <property type="term" value="P:response to amine"/>
    <property type="evidence" value="ECO:0007669"/>
    <property type="project" value="Ensembl"/>
</dbReference>
<dbReference type="GO" id="GO:0035864">
    <property type="term" value="P:response to potassium ion"/>
    <property type="evidence" value="ECO:0007669"/>
    <property type="project" value="Ensembl"/>
</dbReference>
<dbReference type="GO" id="GO:0009636">
    <property type="term" value="P:response to toxic substance"/>
    <property type="evidence" value="ECO:0007669"/>
    <property type="project" value="Ensembl"/>
</dbReference>
<dbReference type="CDD" id="cd04273">
    <property type="entry name" value="ZnMc_ADAMTS_like"/>
    <property type="match status" value="1"/>
</dbReference>
<dbReference type="FunFam" id="3.40.1620.60:FF:000001">
    <property type="entry name" value="A disintegrin and metalloproteinase with thrombospondin motifs 3"/>
    <property type="match status" value="1"/>
</dbReference>
<dbReference type="FunFam" id="2.60.120.830:FF:000003">
    <property type="entry name" value="ADAM metallopeptidase with thrombospondin type 1 motif 13"/>
    <property type="match status" value="1"/>
</dbReference>
<dbReference type="FunFam" id="2.20.100.10:FF:000005">
    <property type="entry name" value="ADAM metallopeptidase with thrombospondin type 1 motif 9"/>
    <property type="match status" value="1"/>
</dbReference>
<dbReference type="FunFam" id="2.20.100.10:FF:000009">
    <property type="entry name" value="ADAMTS-like protein 3 isoform A"/>
    <property type="match status" value="1"/>
</dbReference>
<dbReference type="FunFam" id="2.20.100.10:FF:000007">
    <property type="entry name" value="Thrombospondin 1"/>
    <property type="match status" value="1"/>
</dbReference>
<dbReference type="Gene3D" id="2.60.120.830">
    <property type="match status" value="1"/>
</dbReference>
<dbReference type="Gene3D" id="3.40.1620.60">
    <property type="match status" value="1"/>
</dbReference>
<dbReference type="Gene3D" id="3.40.390.10">
    <property type="entry name" value="Collagenase (Catalytic Domain)"/>
    <property type="match status" value="1"/>
</dbReference>
<dbReference type="Gene3D" id="2.20.100.10">
    <property type="entry name" value="Thrombospondin type-1 (TSP1) repeat"/>
    <property type="match status" value="3"/>
</dbReference>
<dbReference type="InterPro" id="IPR006586">
    <property type="entry name" value="ADAM_Cys-rich"/>
</dbReference>
<dbReference type="InterPro" id="IPR013273">
    <property type="entry name" value="ADAMTS/ADAMTS-like"/>
</dbReference>
<dbReference type="InterPro" id="IPR050439">
    <property type="entry name" value="ADAMTS_ADAMTS-like"/>
</dbReference>
<dbReference type="InterPro" id="IPR041645">
    <property type="entry name" value="ADAMTS_CR_2"/>
</dbReference>
<dbReference type="InterPro" id="IPR045371">
    <property type="entry name" value="ADAMTS_CR_3"/>
</dbReference>
<dbReference type="InterPro" id="IPR010294">
    <property type="entry name" value="ADAMTS_spacer1"/>
</dbReference>
<dbReference type="InterPro" id="IPR024079">
    <property type="entry name" value="MetalloPept_cat_dom_sf"/>
</dbReference>
<dbReference type="InterPro" id="IPR001590">
    <property type="entry name" value="Peptidase_M12B"/>
</dbReference>
<dbReference type="InterPro" id="IPR035914">
    <property type="entry name" value="Sperma_CUB_dom_sf"/>
</dbReference>
<dbReference type="InterPro" id="IPR000884">
    <property type="entry name" value="TSP1_rpt"/>
</dbReference>
<dbReference type="InterPro" id="IPR036383">
    <property type="entry name" value="TSP1_rpt_sf"/>
</dbReference>
<dbReference type="PANTHER" id="PTHR13723:SF20">
    <property type="entry name" value="A DISINTEGRIN AND METALLOPROTEINASE WITH THROMBOSPONDIN MOTIFS 13"/>
    <property type="match status" value="1"/>
</dbReference>
<dbReference type="PANTHER" id="PTHR13723">
    <property type="entry name" value="ADAMTS A DISINTEGRIN AND METALLOPROTEASE WITH THROMBOSPONDIN MOTIFS PROTEASE"/>
    <property type="match status" value="1"/>
</dbReference>
<dbReference type="Pfam" id="PF17771">
    <property type="entry name" value="ADAMTS_CR_2"/>
    <property type="match status" value="1"/>
</dbReference>
<dbReference type="Pfam" id="PF19236">
    <property type="entry name" value="ADAMTS_CR_3"/>
    <property type="match status" value="1"/>
</dbReference>
<dbReference type="Pfam" id="PF05986">
    <property type="entry name" value="ADAMTS_spacer1"/>
    <property type="match status" value="1"/>
</dbReference>
<dbReference type="Pfam" id="PF01421">
    <property type="entry name" value="Reprolysin"/>
    <property type="match status" value="1"/>
</dbReference>
<dbReference type="Pfam" id="PF19030">
    <property type="entry name" value="TSP1_ADAMTS"/>
    <property type="match status" value="4"/>
</dbReference>
<dbReference type="Pfam" id="PF00090">
    <property type="entry name" value="TSP_1"/>
    <property type="match status" value="1"/>
</dbReference>
<dbReference type="PRINTS" id="PR01857">
    <property type="entry name" value="ADAMTSFAMILY"/>
</dbReference>
<dbReference type="SMART" id="SM00608">
    <property type="entry name" value="ACR"/>
    <property type="match status" value="1"/>
</dbReference>
<dbReference type="SMART" id="SM00209">
    <property type="entry name" value="TSP1"/>
    <property type="match status" value="6"/>
</dbReference>
<dbReference type="SUPFAM" id="SSF55486">
    <property type="entry name" value="Metalloproteases ('zincins'), catalytic domain"/>
    <property type="match status" value="1"/>
</dbReference>
<dbReference type="SUPFAM" id="SSF49854">
    <property type="entry name" value="Spermadhesin, CUB domain"/>
    <property type="match status" value="2"/>
</dbReference>
<dbReference type="SUPFAM" id="SSF82895">
    <property type="entry name" value="TSP-1 type 1 repeat"/>
    <property type="match status" value="4"/>
</dbReference>
<dbReference type="PROSITE" id="PS50215">
    <property type="entry name" value="ADAM_MEPRO"/>
    <property type="match status" value="1"/>
</dbReference>
<dbReference type="PROSITE" id="PS50092">
    <property type="entry name" value="TSP1"/>
    <property type="match status" value="4"/>
</dbReference>
<dbReference type="PROSITE" id="PS00142">
    <property type="entry name" value="ZINC_PROTEASE"/>
    <property type="match status" value="1"/>
</dbReference>
<protein>
    <recommendedName>
        <fullName>A disintegrin and metalloproteinase with thrombospondin motifs 13</fullName>
        <shortName>ADAM-TS 13</shortName>
        <shortName>ADAM-TS13</shortName>
        <shortName>ADAMTS-13</shortName>
        <ecNumber evidence="9">3.4.24.87</ecNumber>
    </recommendedName>
    <alternativeName>
        <fullName>von Willebrand factor-cleaving protease</fullName>
        <shortName>vWF-CP</shortName>
        <shortName>vWF-cleaving protease</shortName>
    </alternativeName>
</protein>